<dbReference type="EMBL" id="AL123456">
    <property type="protein sequence ID" value="CCP45329.1"/>
    <property type="molecule type" value="Genomic_DNA"/>
</dbReference>
<dbReference type="PIR" id="B70658">
    <property type="entry name" value="B70658"/>
</dbReference>
<dbReference type="RefSeq" id="NP_217050.1">
    <property type="nucleotide sequence ID" value="NC_000962.3"/>
</dbReference>
<dbReference type="RefSeq" id="WP_003412989.1">
    <property type="nucleotide sequence ID" value="NZ_NVQJ01000032.1"/>
</dbReference>
<dbReference type="SMR" id="P9WNM3"/>
<dbReference type="FunCoup" id="P9WNM3">
    <property type="interactions" value="258"/>
</dbReference>
<dbReference type="STRING" id="83332.Rv2534c"/>
<dbReference type="PaxDb" id="83332-Rv2534c"/>
<dbReference type="DNASU" id="888437"/>
<dbReference type="GeneID" id="45426535"/>
<dbReference type="GeneID" id="888437"/>
<dbReference type="KEGG" id="mtu:Rv2534c"/>
<dbReference type="KEGG" id="mtv:RVBD_2534c"/>
<dbReference type="TubercuList" id="Rv2534c"/>
<dbReference type="eggNOG" id="COG0231">
    <property type="taxonomic scope" value="Bacteria"/>
</dbReference>
<dbReference type="InParanoid" id="P9WNM3"/>
<dbReference type="OrthoDB" id="9801844at2"/>
<dbReference type="PhylomeDB" id="P9WNM3"/>
<dbReference type="UniPathway" id="UPA00345"/>
<dbReference type="Proteomes" id="UP000001584">
    <property type="component" value="Chromosome"/>
</dbReference>
<dbReference type="GO" id="GO:0005737">
    <property type="term" value="C:cytoplasm"/>
    <property type="evidence" value="ECO:0000318"/>
    <property type="project" value="GO_Central"/>
</dbReference>
<dbReference type="GO" id="GO:0003746">
    <property type="term" value="F:translation elongation factor activity"/>
    <property type="evidence" value="ECO:0000318"/>
    <property type="project" value="GO_Central"/>
</dbReference>
<dbReference type="GO" id="GO:0043043">
    <property type="term" value="P:peptide biosynthetic process"/>
    <property type="evidence" value="ECO:0007669"/>
    <property type="project" value="InterPro"/>
</dbReference>
<dbReference type="CDD" id="cd04470">
    <property type="entry name" value="S1_EF-P_repeat_1"/>
    <property type="match status" value="1"/>
</dbReference>
<dbReference type="CDD" id="cd05794">
    <property type="entry name" value="S1_EF-P_repeat_2"/>
    <property type="match status" value="1"/>
</dbReference>
<dbReference type="FunFam" id="2.30.30.30:FF:000003">
    <property type="entry name" value="Elongation factor P"/>
    <property type="match status" value="1"/>
</dbReference>
<dbReference type="FunFam" id="2.40.50.140:FF:000004">
    <property type="entry name" value="Elongation factor P"/>
    <property type="match status" value="1"/>
</dbReference>
<dbReference type="FunFam" id="2.40.50.140:FF:000009">
    <property type="entry name" value="Elongation factor P"/>
    <property type="match status" value="1"/>
</dbReference>
<dbReference type="Gene3D" id="2.30.30.30">
    <property type="match status" value="1"/>
</dbReference>
<dbReference type="Gene3D" id="2.40.50.140">
    <property type="entry name" value="Nucleic acid-binding proteins"/>
    <property type="match status" value="2"/>
</dbReference>
<dbReference type="HAMAP" id="MF_00141">
    <property type="entry name" value="EF_P"/>
    <property type="match status" value="1"/>
</dbReference>
<dbReference type="InterPro" id="IPR015365">
    <property type="entry name" value="Elong-fact-P_C"/>
</dbReference>
<dbReference type="InterPro" id="IPR012340">
    <property type="entry name" value="NA-bd_OB-fold"/>
</dbReference>
<dbReference type="InterPro" id="IPR014722">
    <property type="entry name" value="Rib_uL2_dom2"/>
</dbReference>
<dbReference type="InterPro" id="IPR020599">
    <property type="entry name" value="Transl_elong_fac_P/YeiP"/>
</dbReference>
<dbReference type="InterPro" id="IPR013185">
    <property type="entry name" value="Transl_elong_KOW-like"/>
</dbReference>
<dbReference type="InterPro" id="IPR001059">
    <property type="entry name" value="Transl_elong_P/YeiP_cen"/>
</dbReference>
<dbReference type="InterPro" id="IPR013852">
    <property type="entry name" value="Transl_elong_P/YeiP_CS"/>
</dbReference>
<dbReference type="InterPro" id="IPR011768">
    <property type="entry name" value="Transl_elongation_fac_P"/>
</dbReference>
<dbReference type="InterPro" id="IPR008991">
    <property type="entry name" value="Translation_prot_SH3-like_sf"/>
</dbReference>
<dbReference type="NCBIfam" id="TIGR00038">
    <property type="entry name" value="efp"/>
    <property type="match status" value="1"/>
</dbReference>
<dbReference type="NCBIfam" id="NF001810">
    <property type="entry name" value="PRK00529.1"/>
    <property type="match status" value="1"/>
</dbReference>
<dbReference type="PANTHER" id="PTHR30053">
    <property type="entry name" value="ELONGATION FACTOR P"/>
    <property type="match status" value="1"/>
</dbReference>
<dbReference type="PANTHER" id="PTHR30053:SF12">
    <property type="entry name" value="ELONGATION FACTOR P (EF-P) FAMILY PROTEIN"/>
    <property type="match status" value="1"/>
</dbReference>
<dbReference type="Pfam" id="PF01132">
    <property type="entry name" value="EFP"/>
    <property type="match status" value="1"/>
</dbReference>
<dbReference type="Pfam" id="PF08207">
    <property type="entry name" value="EFP_N"/>
    <property type="match status" value="1"/>
</dbReference>
<dbReference type="Pfam" id="PF09285">
    <property type="entry name" value="Elong-fact-P_C"/>
    <property type="match status" value="1"/>
</dbReference>
<dbReference type="PIRSF" id="PIRSF005901">
    <property type="entry name" value="EF-P"/>
    <property type="match status" value="1"/>
</dbReference>
<dbReference type="SMART" id="SM01185">
    <property type="entry name" value="EFP"/>
    <property type="match status" value="1"/>
</dbReference>
<dbReference type="SMART" id="SM00841">
    <property type="entry name" value="Elong-fact-P_C"/>
    <property type="match status" value="1"/>
</dbReference>
<dbReference type="SUPFAM" id="SSF50249">
    <property type="entry name" value="Nucleic acid-binding proteins"/>
    <property type="match status" value="2"/>
</dbReference>
<dbReference type="SUPFAM" id="SSF50104">
    <property type="entry name" value="Translation proteins SH3-like domain"/>
    <property type="match status" value="1"/>
</dbReference>
<dbReference type="PROSITE" id="PS01275">
    <property type="entry name" value="EFP"/>
    <property type="match status" value="1"/>
</dbReference>
<organism>
    <name type="scientific">Mycobacterium tuberculosis (strain ATCC 25618 / H37Rv)</name>
    <dbReference type="NCBI Taxonomy" id="83332"/>
    <lineage>
        <taxon>Bacteria</taxon>
        <taxon>Bacillati</taxon>
        <taxon>Actinomycetota</taxon>
        <taxon>Actinomycetes</taxon>
        <taxon>Mycobacteriales</taxon>
        <taxon>Mycobacteriaceae</taxon>
        <taxon>Mycobacterium</taxon>
        <taxon>Mycobacterium tuberculosis complex</taxon>
    </lineage>
</organism>
<feature type="chain" id="PRO_0000094292" description="Elongation factor P">
    <location>
        <begin position="1"/>
        <end position="187"/>
    </location>
</feature>
<gene>
    <name type="primary">efp</name>
    <name type="ordered locus">Rv2534c</name>
    <name type="ORF">MTCY159.22</name>
</gene>
<proteinExistence type="evidence at protein level"/>
<comment type="function">
    <text evidence="1">Involved in peptide bond synthesis. Stimulates efficient translation and peptide-bond synthesis on native or reconstituted 70S ribosomes in vitro. Probably functions indirectly by altering the affinity of the ribosome for aminoacyl-tRNA, thus increasing their reactivity as acceptors for peptidyl transferase (By similarity).</text>
</comment>
<comment type="pathway">
    <text>Protein biosynthesis; polypeptide chain elongation.</text>
</comment>
<comment type="subcellular location">
    <subcellularLocation>
        <location evidence="1">Cytoplasm</location>
    </subcellularLocation>
</comment>
<comment type="similarity">
    <text evidence="2">Belongs to the elongation factor P family.</text>
</comment>
<reference key="1">
    <citation type="journal article" date="1998" name="Nature">
        <title>Deciphering the biology of Mycobacterium tuberculosis from the complete genome sequence.</title>
        <authorList>
            <person name="Cole S.T."/>
            <person name="Brosch R."/>
            <person name="Parkhill J."/>
            <person name="Garnier T."/>
            <person name="Churcher C.M."/>
            <person name="Harris D.E."/>
            <person name="Gordon S.V."/>
            <person name="Eiglmeier K."/>
            <person name="Gas S."/>
            <person name="Barry C.E. III"/>
            <person name="Tekaia F."/>
            <person name="Badcock K."/>
            <person name="Basham D."/>
            <person name="Brown D."/>
            <person name="Chillingworth T."/>
            <person name="Connor R."/>
            <person name="Davies R.M."/>
            <person name="Devlin K."/>
            <person name="Feltwell T."/>
            <person name="Gentles S."/>
            <person name="Hamlin N."/>
            <person name="Holroyd S."/>
            <person name="Hornsby T."/>
            <person name="Jagels K."/>
            <person name="Krogh A."/>
            <person name="McLean J."/>
            <person name="Moule S."/>
            <person name="Murphy L.D."/>
            <person name="Oliver S."/>
            <person name="Osborne J."/>
            <person name="Quail M.A."/>
            <person name="Rajandream M.A."/>
            <person name="Rogers J."/>
            <person name="Rutter S."/>
            <person name="Seeger K."/>
            <person name="Skelton S."/>
            <person name="Squares S."/>
            <person name="Squares R."/>
            <person name="Sulston J.E."/>
            <person name="Taylor K."/>
            <person name="Whitehead S."/>
            <person name="Barrell B.G."/>
        </authorList>
    </citation>
    <scope>NUCLEOTIDE SEQUENCE [LARGE SCALE GENOMIC DNA]</scope>
    <source>
        <strain>ATCC 25618 / H37Rv</strain>
    </source>
</reference>
<reference key="2">
    <citation type="journal article" date="2011" name="Mol. Cell. Proteomics">
        <title>Proteogenomic analysis of Mycobacterium tuberculosis by high resolution mass spectrometry.</title>
        <authorList>
            <person name="Kelkar D.S."/>
            <person name="Kumar D."/>
            <person name="Kumar P."/>
            <person name="Balakrishnan L."/>
            <person name="Muthusamy B."/>
            <person name="Yadav A.K."/>
            <person name="Shrivastava P."/>
            <person name="Marimuthu A."/>
            <person name="Anand S."/>
            <person name="Sundaram H."/>
            <person name="Kingsbury R."/>
            <person name="Harsha H.C."/>
            <person name="Nair B."/>
            <person name="Prasad T.S."/>
            <person name="Chauhan D.S."/>
            <person name="Katoch K."/>
            <person name="Katoch V.M."/>
            <person name="Kumar P."/>
            <person name="Chaerkady R."/>
            <person name="Ramachandran S."/>
            <person name="Dash D."/>
            <person name="Pandey A."/>
        </authorList>
    </citation>
    <scope>IDENTIFICATION BY MASS SPECTROMETRY [LARGE SCALE ANALYSIS]</scope>
    <source>
        <strain>ATCC 25618 / H37Rv</strain>
    </source>
</reference>
<name>EFP_MYCTU</name>
<accession>P9WNM3</accession>
<accession>L0TBH7</accession>
<accession>P64034</accession>
<accession>P95019</accession>
<evidence type="ECO:0000250" key="1"/>
<evidence type="ECO:0000305" key="2"/>
<protein>
    <recommendedName>
        <fullName>Elongation factor P</fullName>
        <shortName>EF-P</shortName>
    </recommendedName>
</protein>
<sequence length="187" mass="20407">MATTADFKNGLVLVIDGQLWTITEFQHVKPGKGPAFVRTKLKNVLSGKVVDKTFNAGVKVDTATVDRRDTTYLYRDGSDFVFMDSQDYEQHPLPEALVGDAARFLLEGMPVQVAFHNGVPLYIELPVTVELEVTHTEPGLQGDRSSAGTKPATLQTGAQINVPLFINTGDKLKVDSRDGSYLGRVNA</sequence>
<keyword id="KW-0963">Cytoplasm</keyword>
<keyword id="KW-0251">Elongation factor</keyword>
<keyword id="KW-0648">Protein biosynthesis</keyword>
<keyword id="KW-1185">Reference proteome</keyword>